<sequence length="324" mass="35644">MALTNRLLMNSSALLRSSTLPLAVTSSRQAHAAHNTVINFVPQQEAWVVERMGKFYKILEPGLNFLLPIIDKIKFVQNLREIAIEIPEQGAITIDNVQLRLDGVLYLRVFDPYKASYGVDDPEFAVTQLAQTTMRSEVGKINLDTVFKERELLNENIVFAINKASAPWGIQCMRYEIRDMQMPSKIQEAMQMQVEAERKKRAAILESEGIREAAINRAEGDKKSAILASEAVQAERINVAKGEAEAVILKAESRAKAIERIALALEKDGGANAAGLTVAEQYVGAFGNLAKESNTVVLPANLSDPGSMVSQALAVYDSLSNKKK</sequence>
<comment type="function">
    <text evidence="1 2">Mitochondrial protein that probably regulates the biogenesis and the activity of mitochondria (By similarity). In neurons, involved in mitochondrial fusion and recovery of normal locomotory behavior during reoxygenation; probably acts independently of egl-9 and the canonical hypoxia response pathway (PubMed:24385935).</text>
</comment>
<comment type="subcellular location">
    <subcellularLocation>
        <location evidence="2">Mitochondrion</location>
    </subcellularLocation>
</comment>
<comment type="tissue specificity">
    <text evidence="2">Widely expressed in most tissues, including body wall muscles, intestinal epithelia, and pharynx and head neurons.</text>
</comment>
<comment type="induction">
    <text evidence="2">Induced by anoxia (PubMed:24385935). Induced by paraquat, a chemical causing production of reactive oxygen species (ROS) (PubMed:24385935).</text>
</comment>
<comment type="similarity">
    <text evidence="3">Belongs to the band 7/mec-2 family.</text>
</comment>
<protein>
    <recommendedName>
        <fullName evidence="6">Stomatin-like protein stl-1</fullName>
    </recommendedName>
</protein>
<feature type="chain" id="PRO_0000457771" description="Stomatin-like protein stl-1">
    <location>
        <begin position="1"/>
        <end position="324"/>
    </location>
</feature>
<proteinExistence type="evidence at transcript level"/>
<organism evidence="4">
    <name type="scientific">Caenorhabditis elegans</name>
    <dbReference type="NCBI Taxonomy" id="6239"/>
    <lineage>
        <taxon>Eukaryota</taxon>
        <taxon>Metazoa</taxon>
        <taxon>Ecdysozoa</taxon>
        <taxon>Nematoda</taxon>
        <taxon>Chromadorea</taxon>
        <taxon>Rhabditida</taxon>
        <taxon>Rhabditina</taxon>
        <taxon>Rhabditomorpha</taxon>
        <taxon>Rhabditoidea</taxon>
        <taxon>Rhabditidae</taxon>
        <taxon>Peloderinae</taxon>
        <taxon>Caenorhabditis</taxon>
    </lineage>
</organism>
<evidence type="ECO:0000250" key="1">
    <source>
        <dbReference type="UniProtKB" id="Q9UJZ1"/>
    </source>
</evidence>
<evidence type="ECO:0000269" key="2">
    <source>
    </source>
</evidence>
<evidence type="ECO:0000305" key="3"/>
<evidence type="ECO:0000312" key="4">
    <source>
        <dbReference type="Proteomes" id="UP000001940"/>
    </source>
</evidence>
<evidence type="ECO:0000312" key="5">
    <source>
        <dbReference type="WormBase" id="F30A10.5a"/>
    </source>
</evidence>
<evidence type="ECO:0000312" key="6">
    <source>
        <dbReference type="WormBase" id="F30A10.5b"/>
    </source>
</evidence>
<dbReference type="EMBL" id="BX284601">
    <property type="protein sequence ID" value="CCF23379.1"/>
    <property type="molecule type" value="Genomic_DNA"/>
</dbReference>
<dbReference type="EMBL" id="BX284601">
    <property type="protein sequence ID" value="CCF23380.1"/>
    <property type="molecule type" value="Genomic_DNA"/>
</dbReference>
<dbReference type="RefSeq" id="NP_001251105.1">
    <property type="nucleotide sequence ID" value="NM_001264176.4"/>
</dbReference>
<dbReference type="RefSeq" id="NP_001251106.1">
    <property type="nucleotide sequence ID" value="NM_001264177.4"/>
</dbReference>
<dbReference type="SMR" id="H2FLJ1"/>
<dbReference type="FunCoup" id="H2FLJ1">
    <property type="interactions" value="2754"/>
</dbReference>
<dbReference type="STRING" id="6239.F30A10.5b.2"/>
<dbReference type="PaxDb" id="6239-F30A10.5a"/>
<dbReference type="PeptideAtlas" id="H2FLJ1"/>
<dbReference type="EnsemblMetazoa" id="F30A10.5a.1">
    <property type="protein sequence ID" value="F30A10.5a.1"/>
    <property type="gene ID" value="WBGene00006061"/>
</dbReference>
<dbReference type="EnsemblMetazoa" id="F30A10.5b.1">
    <property type="protein sequence ID" value="F30A10.5b.1"/>
    <property type="gene ID" value="WBGene00006061"/>
</dbReference>
<dbReference type="GeneID" id="172777"/>
<dbReference type="KEGG" id="cel:CELE_F30A10.5"/>
<dbReference type="AGR" id="WB:WBGene00006061"/>
<dbReference type="CTD" id="172777"/>
<dbReference type="WormBase" id="F30A10.5a">
    <property type="protein sequence ID" value="CE47010"/>
    <property type="gene ID" value="WBGene00006061"/>
    <property type="gene designation" value="stl-1"/>
</dbReference>
<dbReference type="WormBase" id="F30A10.5b">
    <property type="protein sequence ID" value="CE47010"/>
    <property type="gene ID" value="WBGene00006061"/>
    <property type="gene designation" value="stl-1"/>
</dbReference>
<dbReference type="eggNOG" id="KOG2620">
    <property type="taxonomic scope" value="Eukaryota"/>
</dbReference>
<dbReference type="GeneTree" id="ENSGT01030000234614"/>
<dbReference type="HOGENOM" id="CLU_024949_2_2_1"/>
<dbReference type="InParanoid" id="H2FLJ1"/>
<dbReference type="OMA" id="YLQMLPK"/>
<dbReference type="OrthoDB" id="434619at2759"/>
<dbReference type="PRO" id="PR:H2FLJ1"/>
<dbReference type="Proteomes" id="UP000001940">
    <property type="component" value="Chromosome I"/>
</dbReference>
<dbReference type="Bgee" id="WBGene00006061">
    <property type="expression patterns" value="Expressed in germ line (C elegans) and 4 other cell types or tissues"/>
</dbReference>
<dbReference type="GO" id="GO:0045121">
    <property type="term" value="C:membrane raft"/>
    <property type="evidence" value="ECO:0007005"/>
    <property type="project" value="WormBase"/>
</dbReference>
<dbReference type="GO" id="GO:0005739">
    <property type="term" value="C:mitochondrion"/>
    <property type="evidence" value="ECO:0000314"/>
    <property type="project" value="WormBase"/>
</dbReference>
<dbReference type="GO" id="GO:0007005">
    <property type="term" value="P:mitochondrion organization"/>
    <property type="evidence" value="ECO:0000318"/>
    <property type="project" value="GO_Central"/>
</dbReference>
<dbReference type="CDD" id="cd08829">
    <property type="entry name" value="SPFH_paraslipin"/>
    <property type="match status" value="1"/>
</dbReference>
<dbReference type="FunFam" id="3.30.479.30:FF:000008">
    <property type="entry name" value="Stomatin-like protein 2, mitochondrial"/>
    <property type="match status" value="1"/>
</dbReference>
<dbReference type="Gene3D" id="3.30.479.30">
    <property type="entry name" value="Band 7 domain"/>
    <property type="match status" value="1"/>
</dbReference>
<dbReference type="InterPro" id="IPR050710">
    <property type="entry name" value="Band7/mec-2_domain"/>
</dbReference>
<dbReference type="InterPro" id="IPR001107">
    <property type="entry name" value="Band_7"/>
</dbReference>
<dbReference type="InterPro" id="IPR036013">
    <property type="entry name" value="Band_7/SPFH_dom_sf"/>
</dbReference>
<dbReference type="InterPro" id="IPR032435">
    <property type="entry name" value="STML2-like_C"/>
</dbReference>
<dbReference type="InterPro" id="IPR001972">
    <property type="entry name" value="Stomatin_HflK_fam"/>
</dbReference>
<dbReference type="PANTHER" id="PTHR43327">
    <property type="entry name" value="STOMATIN-LIKE PROTEIN 2, MITOCHONDRIAL"/>
    <property type="match status" value="1"/>
</dbReference>
<dbReference type="PANTHER" id="PTHR43327:SF10">
    <property type="entry name" value="STOMATIN-LIKE PROTEIN 2, MITOCHONDRIAL"/>
    <property type="match status" value="1"/>
</dbReference>
<dbReference type="Pfam" id="PF01145">
    <property type="entry name" value="Band_7"/>
    <property type="match status" value="1"/>
</dbReference>
<dbReference type="Pfam" id="PF16200">
    <property type="entry name" value="Band_7_C"/>
    <property type="match status" value="1"/>
</dbReference>
<dbReference type="PRINTS" id="PR00721">
    <property type="entry name" value="STOMATIN"/>
</dbReference>
<dbReference type="SMART" id="SM00244">
    <property type="entry name" value="PHB"/>
    <property type="match status" value="1"/>
</dbReference>
<dbReference type="SUPFAM" id="SSF117892">
    <property type="entry name" value="Band 7/SPFH domain"/>
    <property type="match status" value="1"/>
</dbReference>
<name>STML1_CAEEL</name>
<reference evidence="4" key="1">
    <citation type="journal article" date="1998" name="Science">
        <title>Genome sequence of the nematode C. elegans: a platform for investigating biology.</title>
        <authorList>
            <consortium name="The C. elegans sequencing consortium"/>
        </authorList>
    </citation>
    <scope>NUCLEOTIDE SEQUENCE [LARGE SCALE GENOMIC DNA]</scope>
    <source>
        <strain evidence="4">Bristol N2</strain>
    </source>
</reference>
<reference evidence="3" key="2">
    <citation type="journal article" date="2013" name="PLoS Genet.">
        <title>Anoxia-reoxygenation regulates mitochondrial dynamics through the hypoxia response pathway, SKN-1/Nrf, and stomatin-like protein STL-1/SLP-2.</title>
        <authorList>
            <person name="Ghose P."/>
            <person name="Park E.C."/>
            <person name="Tabakin A."/>
            <person name="Salazar-Vasquez N."/>
            <person name="Rongo C."/>
        </authorList>
    </citation>
    <scope>FUNCTION</scope>
    <scope>SUBCELLULAR LOCATION</scope>
    <scope>TISSUE SPECIFICITY</scope>
    <scope>INDUCTION</scope>
</reference>
<gene>
    <name evidence="5 6" type="primary">stl-1</name>
    <name evidence="5 6" type="ORF">F30A10.5</name>
</gene>
<keyword id="KW-0496">Mitochondrion</keyword>
<keyword id="KW-1185">Reference proteome</keyword>
<accession>H2FLJ1</accession>